<protein>
    <recommendedName>
        <fullName evidence="1">Transcriptional repressor NrdR</fullName>
    </recommendedName>
</protein>
<evidence type="ECO:0000255" key="1">
    <source>
        <dbReference type="HAMAP-Rule" id="MF_00440"/>
    </source>
</evidence>
<dbReference type="EMBL" id="CP001087">
    <property type="protein sequence ID" value="ACN16211.1"/>
    <property type="molecule type" value="Genomic_DNA"/>
</dbReference>
<dbReference type="RefSeq" id="WP_015904973.1">
    <property type="nucleotide sequence ID" value="NC_012108.1"/>
</dbReference>
<dbReference type="SMR" id="C0QKX1"/>
<dbReference type="STRING" id="177437.HRM2_31280"/>
<dbReference type="KEGG" id="dat:HRM2_31280"/>
<dbReference type="eggNOG" id="COG1327">
    <property type="taxonomic scope" value="Bacteria"/>
</dbReference>
<dbReference type="HOGENOM" id="CLU_108412_0_0_7"/>
<dbReference type="OrthoDB" id="9807461at2"/>
<dbReference type="Proteomes" id="UP000000442">
    <property type="component" value="Chromosome"/>
</dbReference>
<dbReference type="GO" id="GO:0005524">
    <property type="term" value="F:ATP binding"/>
    <property type="evidence" value="ECO:0007669"/>
    <property type="project" value="UniProtKB-KW"/>
</dbReference>
<dbReference type="GO" id="GO:0003677">
    <property type="term" value="F:DNA binding"/>
    <property type="evidence" value="ECO:0007669"/>
    <property type="project" value="UniProtKB-KW"/>
</dbReference>
<dbReference type="GO" id="GO:0008270">
    <property type="term" value="F:zinc ion binding"/>
    <property type="evidence" value="ECO:0007669"/>
    <property type="project" value="UniProtKB-UniRule"/>
</dbReference>
<dbReference type="GO" id="GO:0045892">
    <property type="term" value="P:negative regulation of DNA-templated transcription"/>
    <property type="evidence" value="ECO:0007669"/>
    <property type="project" value="UniProtKB-UniRule"/>
</dbReference>
<dbReference type="HAMAP" id="MF_00440">
    <property type="entry name" value="NrdR"/>
    <property type="match status" value="1"/>
</dbReference>
<dbReference type="InterPro" id="IPR005144">
    <property type="entry name" value="ATP-cone_dom"/>
</dbReference>
<dbReference type="InterPro" id="IPR055173">
    <property type="entry name" value="NrdR-like_N"/>
</dbReference>
<dbReference type="InterPro" id="IPR003796">
    <property type="entry name" value="RNR_NrdR-like"/>
</dbReference>
<dbReference type="NCBIfam" id="TIGR00244">
    <property type="entry name" value="transcriptional regulator NrdR"/>
    <property type="match status" value="1"/>
</dbReference>
<dbReference type="PANTHER" id="PTHR30455">
    <property type="entry name" value="TRANSCRIPTIONAL REPRESSOR NRDR"/>
    <property type="match status" value="1"/>
</dbReference>
<dbReference type="PANTHER" id="PTHR30455:SF2">
    <property type="entry name" value="TRANSCRIPTIONAL REPRESSOR NRDR"/>
    <property type="match status" value="1"/>
</dbReference>
<dbReference type="Pfam" id="PF03477">
    <property type="entry name" value="ATP-cone"/>
    <property type="match status" value="1"/>
</dbReference>
<dbReference type="Pfam" id="PF22811">
    <property type="entry name" value="Zn_ribbon_NrdR"/>
    <property type="match status" value="1"/>
</dbReference>
<dbReference type="PROSITE" id="PS51161">
    <property type="entry name" value="ATP_CONE"/>
    <property type="match status" value="1"/>
</dbReference>
<proteinExistence type="inferred from homology"/>
<gene>
    <name evidence="1" type="primary">nrdR</name>
    <name type="ordered locus">HRM2_31280</name>
</gene>
<feature type="chain" id="PRO_1000206113" description="Transcriptional repressor NrdR">
    <location>
        <begin position="1"/>
        <end position="165"/>
    </location>
</feature>
<feature type="domain" description="ATP-cone" evidence="1">
    <location>
        <begin position="49"/>
        <end position="139"/>
    </location>
</feature>
<feature type="zinc finger region" evidence="1">
    <location>
        <begin position="3"/>
        <end position="34"/>
    </location>
</feature>
<reference key="1">
    <citation type="journal article" date="2009" name="Environ. Microbiol.">
        <title>Genome sequence of Desulfobacterium autotrophicum HRM2, a marine sulfate reducer oxidizing organic carbon completely to carbon dioxide.</title>
        <authorList>
            <person name="Strittmatter A.W."/>
            <person name="Liesegang H."/>
            <person name="Rabus R."/>
            <person name="Decker I."/>
            <person name="Amann J."/>
            <person name="Andres S."/>
            <person name="Henne A."/>
            <person name="Fricke W.F."/>
            <person name="Martinez-Arias R."/>
            <person name="Bartels D."/>
            <person name="Goesmann A."/>
            <person name="Krause L."/>
            <person name="Puehler A."/>
            <person name="Klenk H.P."/>
            <person name="Richter M."/>
            <person name="Schuler M."/>
            <person name="Gloeckner F.O."/>
            <person name="Meyerdierks A."/>
            <person name="Gottschalk G."/>
            <person name="Amann R."/>
        </authorList>
    </citation>
    <scope>NUCLEOTIDE SEQUENCE [LARGE SCALE GENOMIC DNA]</scope>
    <source>
        <strain>ATCC 43914 / DSM 3382 / VKM B-1955 / HRM2</strain>
    </source>
</reference>
<name>NRDR_DESAH</name>
<comment type="function">
    <text evidence="1">Negatively regulates transcription of bacterial ribonucleotide reductase nrd genes and operons by binding to NrdR-boxes.</text>
</comment>
<comment type="cofactor">
    <cofactor evidence="1">
        <name>Zn(2+)</name>
        <dbReference type="ChEBI" id="CHEBI:29105"/>
    </cofactor>
    <text evidence="1">Binds 1 zinc ion.</text>
</comment>
<comment type="similarity">
    <text evidence="1">Belongs to the NrdR family.</text>
</comment>
<organism>
    <name type="scientific">Desulforapulum autotrophicum (strain ATCC 43914 / DSM 3382 / VKM B-1955 / HRM2)</name>
    <name type="common">Desulfobacterium autotrophicum</name>
    <dbReference type="NCBI Taxonomy" id="177437"/>
    <lineage>
        <taxon>Bacteria</taxon>
        <taxon>Pseudomonadati</taxon>
        <taxon>Thermodesulfobacteriota</taxon>
        <taxon>Desulfobacteria</taxon>
        <taxon>Desulfobacterales</taxon>
        <taxon>Desulfobacteraceae</taxon>
        <taxon>Desulforapulum</taxon>
    </lineage>
</organism>
<accession>C0QKX1</accession>
<keyword id="KW-0067">ATP-binding</keyword>
<keyword id="KW-0238">DNA-binding</keyword>
<keyword id="KW-0479">Metal-binding</keyword>
<keyword id="KW-0547">Nucleotide-binding</keyword>
<keyword id="KW-1185">Reference proteome</keyword>
<keyword id="KW-0678">Repressor</keyword>
<keyword id="KW-0804">Transcription</keyword>
<keyword id="KW-0805">Transcription regulation</keyword>
<keyword id="KW-0862">Zinc</keyword>
<keyword id="KW-0863">Zinc-finger</keyword>
<sequence length="165" mass="19318">MKCPYCGQLNNRVVDSRLSRSEFAVRRRRECLDCMRRFTTYEKVEDLPVMVVKKDGRREEFNRDKILSGIKKACEKRAISVDQIEEVVDSVERDFRDANEKEISSTVVGNKVMELLHRLDDVAYVRFASVYREFKDVDDFIEELKSLIPRKILEDKKPDGCSDDG</sequence>